<protein>
    <recommendedName>
        <fullName evidence="1">DNA-binding protein Fis</fullName>
    </recommendedName>
</protein>
<sequence length="98" mass="11388">MLEKKTNTEFLVLSTTNTQDKNIKQPLCELVKKSLKYYLSNLNGKDVNNLYELALSELEQPLLDMIMQYTRGNQTRAALMLGINRSTLRKKLKKYSMN</sequence>
<evidence type="ECO:0000255" key="1">
    <source>
        <dbReference type="HAMAP-Rule" id="MF_00166"/>
    </source>
</evidence>
<dbReference type="EMBL" id="BA000003">
    <property type="protein sequence ID" value="BAB13103.1"/>
    <property type="molecule type" value="Genomic_DNA"/>
</dbReference>
<dbReference type="RefSeq" id="NP_240217.1">
    <property type="nucleotide sequence ID" value="NC_002528.1"/>
</dbReference>
<dbReference type="RefSeq" id="WP_009874358.1">
    <property type="nucleotide sequence ID" value="NZ_AP036055.1"/>
</dbReference>
<dbReference type="SMR" id="P57480"/>
<dbReference type="STRING" id="563178.BUAP5A_393"/>
<dbReference type="EnsemblBacteria" id="BAB13103">
    <property type="protein sequence ID" value="BAB13103"/>
    <property type="gene ID" value="BAB13103"/>
</dbReference>
<dbReference type="KEGG" id="buc:BU400"/>
<dbReference type="PATRIC" id="fig|107806.10.peg.414"/>
<dbReference type="eggNOG" id="COG2901">
    <property type="taxonomic scope" value="Bacteria"/>
</dbReference>
<dbReference type="HOGENOM" id="CLU_158040_3_0_6"/>
<dbReference type="Proteomes" id="UP000001806">
    <property type="component" value="Chromosome"/>
</dbReference>
<dbReference type="GO" id="GO:0003700">
    <property type="term" value="F:DNA-binding transcription factor activity"/>
    <property type="evidence" value="ECO:0007669"/>
    <property type="project" value="UniProtKB-UniRule"/>
</dbReference>
<dbReference type="GO" id="GO:0043565">
    <property type="term" value="F:sequence-specific DNA binding"/>
    <property type="evidence" value="ECO:0007669"/>
    <property type="project" value="InterPro"/>
</dbReference>
<dbReference type="FunFam" id="1.10.10.60:FF:000006">
    <property type="entry name" value="DNA-binding protein Fis"/>
    <property type="match status" value="1"/>
</dbReference>
<dbReference type="Gene3D" id="1.10.10.60">
    <property type="entry name" value="Homeodomain-like"/>
    <property type="match status" value="1"/>
</dbReference>
<dbReference type="HAMAP" id="MF_00166">
    <property type="entry name" value="DNA_binding_Fis"/>
    <property type="match status" value="1"/>
</dbReference>
<dbReference type="InterPro" id="IPR005412">
    <property type="entry name" value="Fis_DNA-bd"/>
</dbReference>
<dbReference type="InterPro" id="IPR009057">
    <property type="entry name" value="Homeodomain-like_sf"/>
</dbReference>
<dbReference type="InterPro" id="IPR002197">
    <property type="entry name" value="HTH_Fis"/>
</dbReference>
<dbReference type="InterPro" id="IPR050207">
    <property type="entry name" value="Trans_regulatory_Fis"/>
</dbReference>
<dbReference type="NCBIfam" id="NF001659">
    <property type="entry name" value="PRK00430.1"/>
    <property type="match status" value="1"/>
</dbReference>
<dbReference type="PANTHER" id="PTHR47918">
    <property type="entry name" value="DNA-BINDING PROTEIN FIS"/>
    <property type="match status" value="1"/>
</dbReference>
<dbReference type="PANTHER" id="PTHR47918:SF1">
    <property type="entry name" value="DNA-BINDING PROTEIN FIS"/>
    <property type="match status" value="1"/>
</dbReference>
<dbReference type="Pfam" id="PF02954">
    <property type="entry name" value="HTH_8"/>
    <property type="match status" value="1"/>
</dbReference>
<dbReference type="PIRSF" id="PIRSF002097">
    <property type="entry name" value="DNA-binding_Fis"/>
    <property type="match status" value="1"/>
</dbReference>
<dbReference type="PRINTS" id="PR01591">
    <property type="entry name" value="DNABINDNGFIS"/>
</dbReference>
<dbReference type="PRINTS" id="PR01590">
    <property type="entry name" value="HTHFIS"/>
</dbReference>
<dbReference type="SUPFAM" id="SSF46689">
    <property type="entry name" value="Homeodomain-like"/>
    <property type="match status" value="1"/>
</dbReference>
<feature type="chain" id="PRO_0000203876" description="DNA-binding protein Fis">
    <location>
        <begin position="1"/>
        <end position="98"/>
    </location>
</feature>
<feature type="DNA-binding region" description="H-T-H motif" evidence="1">
    <location>
        <begin position="74"/>
        <end position="93"/>
    </location>
</feature>
<proteinExistence type="inferred from homology"/>
<gene>
    <name evidence="1" type="primary">fis</name>
    <name type="ordered locus">BU400</name>
</gene>
<accession>P57480</accession>
<organism>
    <name type="scientific">Buchnera aphidicola subsp. Acyrthosiphon pisum (strain APS)</name>
    <name type="common">Acyrthosiphon pisum symbiotic bacterium</name>
    <dbReference type="NCBI Taxonomy" id="107806"/>
    <lineage>
        <taxon>Bacteria</taxon>
        <taxon>Pseudomonadati</taxon>
        <taxon>Pseudomonadota</taxon>
        <taxon>Gammaproteobacteria</taxon>
        <taxon>Enterobacterales</taxon>
        <taxon>Erwiniaceae</taxon>
        <taxon>Buchnera</taxon>
    </lineage>
</organism>
<comment type="function">
    <text evidence="1">Activates ribosomal RNA transcription. Plays a direct role in upstream activation of rRNA promoters.</text>
</comment>
<comment type="subunit">
    <text evidence="1">Homodimer.</text>
</comment>
<comment type="similarity">
    <text evidence="1">Belongs to the transcriptional regulatory Fis family.</text>
</comment>
<name>FIS_BUCAI</name>
<reference key="1">
    <citation type="journal article" date="2000" name="Nature">
        <title>Genome sequence of the endocellular bacterial symbiont of aphids Buchnera sp. APS.</title>
        <authorList>
            <person name="Shigenobu S."/>
            <person name="Watanabe H."/>
            <person name="Hattori M."/>
            <person name="Sakaki Y."/>
            <person name="Ishikawa H."/>
        </authorList>
    </citation>
    <scope>NUCLEOTIDE SEQUENCE [LARGE SCALE GENOMIC DNA]</scope>
    <source>
        <strain>APS</strain>
    </source>
</reference>
<keyword id="KW-0010">Activator</keyword>
<keyword id="KW-0238">DNA-binding</keyword>
<keyword id="KW-1185">Reference proteome</keyword>
<keyword id="KW-0804">Transcription</keyword>
<keyword id="KW-0805">Transcription regulation</keyword>